<gene>
    <name type="ordered locus">PA14_25520</name>
</gene>
<comment type="similarity">
    <text evidence="1">Belongs to the UPF0434 family.</text>
</comment>
<reference key="1">
    <citation type="journal article" date="2006" name="Genome Biol.">
        <title>Genomic analysis reveals that Pseudomonas aeruginosa virulence is combinatorial.</title>
        <authorList>
            <person name="Lee D.G."/>
            <person name="Urbach J.M."/>
            <person name="Wu G."/>
            <person name="Liberati N.T."/>
            <person name="Feinbaum R.L."/>
            <person name="Miyata S."/>
            <person name="Diggins L.T."/>
            <person name="He J."/>
            <person name="Saucier M."/>
            <person name="Deziel E."/>
            <person name="Friedman L."/>
            <person name="Li L."/>
            <person name="Grills G."/>
            <person name="Montgomery K."/>
            <person name="Kucherlapati R."/>
            <person name="Rahme L.G."/>
            <person name="Ausubel F.M."/>
        </authorList>
    </citation>
    <scope>NUCLEOTIDE SEQUENCE [LARGE SCALE GENOMIC DNA]</scope>
    <source>
        <strain>UCBPP-PA14</strain>
    </source>
</reference>
<dbReference type="EMBL" id="CP000438">
    <property type="protein sequence ID" value="ABJ12218.1"/>
    <property type="molecule type" value="Genomic_DNA"/>
</dbReference>
<dbReference type="RefSeq" id="WP_003091157.1">
    <property type="nucleotide sequence ID" value="NZ_CP034244.1"/>
</dbReference>
<dbReference type="SMR" id="Q02PE3"/>
<dbReference type="KEGG" id="pau:PA14_25520"/>
<dbReference type="PseudoCAP" id="PA14_25520"/>
<dbReference type="HOGENOM" id="CLU_155659_2_2_6"/>
<dbReference type="BioCyc" id="PAER208963:G1G74-2128-MONOMER"/>
<dbReference type="Proteomes" id="UP000000653">
    <property type="component" value="Chromosome"/>
</dbReference>
<dbReference type="GO" id="GO:0005829">
    <property type="term" value="C:cytosol"/>
    <property type="evidence" value="ECO:0007669"/>
    <property type="project" value="TreeGrafter"/>
</dbReference>
<dbReference type="FunFam" id="2.20.25.10:FF:000002">
    <property type="entry name" value="UPF0434 protein YcaR"/>
    <property type="match status" value="1"/>
</dbReference>
<dbReference type="Gene3D" id="2.20.25.10">
    <property type="match status" value="1"/>
</dbReference>
<dbReference type="HAMAP" id="MF_01187">
    <property type="entry name" value="UPF0434"/>
    <property type="match status" value="1"/>
</dbReference>
<dbReference type="InterPro" id="IPR005651">
    <property type="entry name" value="Trm112-like"/>
</dbReference>
<dbReference type="PANTHER" id="PTHR33505:SF4">
    <property type="entry name" value="PROTEIN PREY, MITOCHONDRIAL"/>
    <property type="match status" value="1"/>
</dbReference>
<dbReference type="PANTHER" id="PTHR33505">
    <property type="entry name" value="ZGC:162634"/>
    <property type="match status" value="1"/>
</dbReference>
<dbReference type="Pfam" id="PF03966">
    <property type="entry name" value="Trm112p"/>
    <property type="match status" value="1"/>
</dbReference>
<dbReference type="SUPFAM" id="SSF158997">
    <property type="entry name" value="Trm112p-like"/>
    <property type="match status" value="1"/>
</dbReference>
<protein>
    <recommendedName>
        <fullName evidence="1">UPF0434 protein PA14_25520</fullName>
    </recommendedName>
</protein>
<sequence length="61" mass="6721">MDPKLLDILACPLTKGPLVLSEDKTELISKQAGLAYPIRDGIPVMLESEARSLNVDERLDK</sequence>
<evidence type="ECO:0000255" key="1">
    <source>
        <dbReference type="HAMAP-Rule" id="MF_01187"/>
    </source>
</evidence>
<organism>
    <name type="scientific">Pseudomonas aeruginosa (strain UCBPP-PA14)</name>
    <dbReference type="NCBI Taxonomy" id="208963"/>
    <lineage>
        <taxon>Bacteria</taxon>
        <taxon>Pseudomonadati</taxon>
        <taxon>Pseudomonadota</taxon>
        <taxon>Gammaproteobacteria</taxon>
        <taxon>Pseudomonadales</taxon>
        <taxon>Pseudomonadaceae</taxon>
        <taxon>Pseudomonas</taxon>
    </lineage>
</organism>
<accession>Q02PE3</accession>
<proteinExistence type="inferred from homology"/>
<name>Y2552_PSEAB</name>
<feature type="chain" id="PRO_0000291132" description="UPF0434 protein PA14_25520">
    <location>
        <begin position="1"/>
        <end position="61"/>
    </location>
</feature>